<name>IPA25_SHIFL</name>
<protein>
    <recommendedName>
        <fullName evidence="8">E3 ubiquitin-protein ligase IpaH2.5</fullName>
        <ecNumber evidence="5">2.3.2.27</ecNumber>
    </recommendedName>
    <alternativeName>
        <fullName evidence="7">Invasion plasmid antigen 2.5</fullName>
    </alternativeName>
</protein>
<proteinExistence type="evidence at protein level"/>
<feature type="chain" id="PRO_0000454197" description="E3 ubiquitin-protein ligase IpaH2.5">
    <location>
        <begin position="1"/>
        <end position="563"/>
    </location>
</feature>
<feature type="repeat" description="LRR 1" evidence="3">
    <location>
        <begin position="69"/>
        <end position="90"/>
    </location>
</feature>
<feature type="repeat" description="LRR 2" evidence="3">
    <location>
        <begin position="91"/>
        <end position="115"/>
    </location>
</feature>
<feature type="repeat" description="LRR 3" evidence="3">
    <location>
        <begin position="117"/>
        <end position="130"/>
    </location>
</feature>
<feature type="repeat" description="LRR 4" evidence="3">
    <location>
        <begin position="131"/>
        <end position="150"/>
    </location>
</feature>
<feature type="repeat" description="LRR 5" evidence="3">
    <location>
        <begin position="151"/>
        <end position="170"/>
    </location>
</feature>
<feature type="repeat" description="LRR 6" evidence="3">
    <location>
        <begin position="171"/>
        <end position="195"/>
    </location>
</feature>
<feature type="repeat" description="LRR 7" evidence="3">
    <location>
        <begin position="197"/>
        <end position="209"/>
    </location>
</feature>
<feature type="repeat" description="LRR 8" evidence="3">
    <location>
        <begin position="210"/>
        <end position="233"/>
    </location>
</feature>
<feature type="domain" description="NEL" evidence="4">
    <location>
        <begin position="284"/>
        <end position="563"/>
    </location>
</feature>
<feature type="region of interest" description="Interaction with target proteins" evidence="1">
    <location>
        <begin position="1"/>
        <end position="270"/>
    </location>
</feature>
<feature type="region of interest" description="Linker" evidence="1">
    <location>
        <begin position="271"/>
        <end position="281"/>
    </location>
</feature>
<feature type="region of interest" description="E3 ubiquitin-protein ligase catalytic domain" evidence="1">
    <location>
        <begin position="282"/>
        <end position="563"/>
    </location>
</feature>
<feature type="active site" description="Glycyl thioester intermediate" evidence="4 9">
    <location>
        <position position="368"/>
    </location>
</feature>
<feature type="mutagenesis site" description="Abolished E3 ubiquitin-protein ligase activity and ability to ubiquitinate host RNF31/HOIP." evidence="5">
    <original>C</original>
    <variation>S</variation>
    <location>
        <position position="368"/>
    </location>
</feature>
<feature type="helix" evidence="11">
    <location>
        <begin position="38"/>
        <end position="50"/>
    </location>
</feature>
<feature type="helix" evidence="11">
    <location>
        <begin position="58"/>
        <end position="70"/>
    </location>
</feature>
<feature type="strand" evidence="11">
    <location>
        <begin position="74"/>
        <end position="77"/>
    </location>
</feature>
<feature type="strand" evidence="11">
    <location>
        <begin position="94"/>
        <end position="97"/>
    </location>
</feature>
<feature type="strand" evidence="11">
    <location>
        <begin position="115"/>
        <end position="117"/>
    </location>
</feature>
<feature type="strand" evidence="11">
    <location>
        <begin position="135"/>
        <end position="137"/>
    </location>
</feature>
<feature type="strand" evidence="11">
    <location>
        <begin position="155"/>
        <end position="157"/>
    </location>
</feature>
<feature type="strand" evidence="11">
    <location>
        <begin position="175"/>
        <end position="177"/>
    </location>
</feature>
<feature type="strand" evidence="11">
    <location>
        <begin position="195"/>
        <end position="197"/>
    </location>
</feature>
<feature type="strand" evidence="11">
    <location>
        <begin position="215"/>
        <end position="217"/>
    </location>
</feature>
<feature type="helix" evidence="11">
    <location>
        <begin position="228"/>
        <end position="232"/>
    </location>
</feature>
<feature type="strand" evidence="11">
    <location>
        <begin position="238"/>
        <end position="240"/>
    </location>
</feature>
<feature type="helix" evidence="11">
    <location>
        <begin position="248"/>
        <end position="258"/>
    </location>
</feature>
<feature type="strand" evidence="11">
    <location>
        <begin position="267"/>
        <end position="269"/>
    </location>
</feature>
<reference key="1">
    <citation type="journal article" date="2002" name="Nucleic Acids Res.">
        <title>Genome sequence of Shigella flexneri 2a: insights into pathogenicity through comparison with genomes of Escherichia coli K12 and O157.</title>
        <authorList>
            <person name="Jin Q."/>
            <person name="Yuan Z."/>
            <person name="Xu J."/>
            <person name="Wang Y."/>
            <person name="Shen Y."/>
            <person name="Lu W."/>
            <person name="Wang J."/>
            <person name="Liu H."/>
            <person name="Yang J."/>
            <person name="Yang F."/>
            <person name="Zhang X."/>
            <person name="Zhang J."/>
            <person name="Yang G."/>
            <person name="Wu H."/>
            <person name="Qu D."/>
            <person name="Dong J."/>
            <person name="Sun L."/>
            <person name="Xue Y."/>
            <person name="Zhao A."/>
            <person name="Gao Y."/>
            <person name="Zhu J."/>
            <person name="Kan B."/>
            <person name="Ding K."/>
            <person name="Chen S."/>
            <person name="Cheng H."/>
            <person name="Yao Z."/>
            <person name="He B."/>
            <person name="Chen R."/>
            <person name="Ma D."/>
            <person name="Qiang B."/>
            <person name="Wen Y."/>
            <person name="Hou Y."/>
            <person name="Yu J."/>
        </authorList>
    </citation>
    <scope>NUCLEOTIDE SEQUENCE [LARGE SCALE GENOMIC DNA]</scope>
    <source>
        <strain>301 / Serotype 2a</strain>
        <plasmid>pCP301</plasmid>
    </source>
</reference>
<reference key="2">
    <citation type="journal article" date="1990" name="J. Bacteriol.">
        <title>Sequence and molecular characterization of a multicopy invasion plasmid antigen gene, ipaH, of Shigella flexneri.</title>
        <authorList>
            <person name="Hartman A.B."/>
            <person name="Venkatesan M.M."/>
            <person name="Oaks E.V."/>
            <person name="Buysse J.M."/>
        </authorList>
    </citation>
    <scope>IDENTIFICATION</scope>
    <source>
        <strain>M90T / Serotype 5a</strain>
    </source>
</reference>
<reference key="3">
    <citation type="journal article" date="2016" name="Nat. Microbiol.">
        <title>Shigella flexneri suppresses NF-kappaB activation by inhibiting linear ubiquitin chain ligation.</title>
        <authorList>
            <person name="de Jong M.F."/>
            <person name="Liu Z."/>
            <person name="Chen D."/>
            <person name="Alto N.M."/>
        </authorList>
    </citation>
    <scope>FUNCTION</scope>
    <scope>PATHWAY</scope>
    <scope>CATALYTIC ACTIVITY</scope>
    <scope>INTERACTION WITH HUMAN RBCK1 AND RNF31</scope>
    <scope>ACTIVE SITE</scope>
    <scope>MUTAGENESIS OF CYS-368</scope>
</reference>
<reference evidence="11" key="4">
    <citation type="journal article" date="2023" name="J. Biochem.">
        <title>Structural insight into the recognition of the linear ubiquitin assembly complex by Shigella E3 ligase IpaH1.4/2.5.</title>
        <authorList>
            <person name="Hiragi K."/>
            <person name="Nishide A."/>
            <person name="Takagi K."/>
            <person name="Iwai K."/>
            <person name="Kim M."/>
            <person name="Mizushima T."/>
        </authorList>
    </citation>
    <scope>X-RAY CRYSTALLOGRAPHY (3.40 ANGSTROMS) OF 36-274</scope>
    <scope>FUNCTION</scope>
    <scope>PATHWAY</scope>
</reference>
<sequence>MIKSTNIQVIGSGIMHQINNIHSLTLFSLPVSLSPSCNEYYLKVWSEWERNGTPGEQRNIAFNRLKICLQNQEAELNLSELDLKTLPDLPPQITTLEIRKNLLTHLPDLPPMLKVIHAQFNQLESLPALPETLEELNAGDNKIKELPFLPENLTHLRVHNNRLHILPLLPPELKLLVVSGNRLDSIPPFPDKLEGLALANNFIEQLPELPFSMNRAVLMNNNLTTLPESVLRLAQNAFVNVAGNPLSGHTMRTLQQITTGPDYSGPQIFFSMGNSATISAPEHSLADAVTAWFPENKQSDVSQIWHAFEHEEHANTFSAFLDRLSDTVSARNTSGFREQVAAWLEKLSASAELRQQSFAVAADATESCEDRVALTWNNLRKTLLVHQASEGLFDNDTGALLSLGREMFRLEILEDIARDKVRTLHFVDEIEVYLAFQTMLAEKLQLSTAVKEMRFYGVSGVTANDLRTAEAMVRSREENEFTDWFSLWGPWHAVLKRTEADRWAQAEEQKYEMLENEYSQRVADRLKASGLSGDADAEREAGAQVMRETEQQIYRQLTDEVLA</sequence>
<comment type="function">
    <text evidence="5 6">E3 ubiquitin-protein ligase effector that inhibits host cell innate immunity during bacterial infection by catalyzing 'Lys-48'-linked polyubiquitination and subsequent degradation of host RNF31/HOIP (PubMed:27572974, PubMed:36610722). Host RNF31/HOIP is the catalytic component of the LUBAC complex, which conjugates linear ('Met-1'-linked) polyubiquitin chains at the surface of bacteria invading the host cytosol to form the ubiquitin coat surrounding bacteria (PubMed:27572974). The bacterial ubiquitin coat acts as an 'eat-me' signal for xenophagy and promotes NF-kappa-B activation (PubMed:27572974).</text>
</comment>
<comment type="catalytic activity">
    <reaction evidence="5">
        <text>S-ubiquitinyl-[E2 ubiquitin-conjugating enzyme]-L-cysteine + [acceptor protein]-L-lysine = [E2 ubiquitin-conjugating enzyme]-L-cysteine + N(6)-ubiquitinyl-[acceptor protein]-L-lysine.</text>
        <dbReference type="EC" id="2.3.2.27"/>
    </reaction>
</comment>
<comment type="activity regulation">
    <text evidence="2">Exists in an autoinhibited state in the absence of substrate protein, probably due to interactions of the leucine-rich repeat domain with the catalytic domain. Is activated upon binding to a substrate protein.</text>
</comment>
<comment type="pathway">
    <text evidence="5 6">Protein modification; protein ubiquitination.</text>
</comment>
<comment type="subunit">
    <text evidence="5">Interacts with human RBCK1/HOIL-1 and RNF31/HOIP components of the LUBAC complex.</text>
</comment>
<comment type="subcellular location">
    <subcellularLocation>
        <location evidence="2">Secreted</location>
    </subcellularLocation>
    <subcellularLocation>
        <location evidence="2">Host cytoplasm</location>
    </subcellularLocation>
    <text evidence="2">Secreted via Mxi-Spa type III secretion system (T3SS), and delivered into the host cytoplasm.</text>
</comment>
<comment type="domain">
    <text evidence="1">The LRR (leucine-rich repeat) domain forms a slightly curved solenoid and may mediate interaction with target proteins.</text>
</comment>
<comment type="PTM">
    <text evidence="4">Ubiquitinated in the presence of host E1 ubiquitin-activating enzyme, E2 ubiquitin-conjugating enzyme and ubiquitin.</text>
</comment>
<comment type="similarity">
    <text evidence="4 8">Belongs to the LRR-containing bacterial E3 ligase family.</text>
</comment>
<keyword id="KW-0002">3D-structure</keyword>
<keyword id="KW-1035">Host cytoplasm</keyword>
<keyword id="KW-0433">Leucine-rich repeat</keyword>
<keyword id="KW-0614">Plasmid</keyword>
<keyword id="KW-1185">Reference proteome</keyword>
<keyword id="KW-0677">Repeat</keyword>
<keyword id="KW-0964">Secreted</keyword>
<keyword id="KW-0808">Transferase</keyword>
<keyword id="KW-0832">Ubl conjugation</keyword>
<keyword id="KW-0833">Ubl conjugation pathway</keyword>
<keyword id="KW-0843">Virulence</keyword>
<geneLocation type="plasmid">
    <name>pCP301</name>
</geneLocation>
<evidence type="ECO:0000250" key="1">
    <source>
        <dbReference type="UniProtKB" id="P0CE12"/>
    </source>
</evidence>
<evidence type="ECO:0000250" key="2">
    <source>
        <dbReference type="UniProtKB" id="Q8VSC3"/>
    </source>
</evidence>
<evidence type="ECO:0000255" key="3"/>
<evidence type="ECO:0000255" key="4">
    <source>
        <dbReference type="PROSITE-ProRule" id="PRU01398"/>
    </source>
</evidence>
<evidence type="ECO:0000269" key="5">
    <source>
    </source>
</evidence>
<evidence type="ECO:0000269" key="6">
    <source>
    </source>
</evidence>
<evidence type="ECO:0000303" key="7">
    <source>
    </source>
</evidence>
<evidence type="ECO:0000305" key="8"/>
<evidence type="ECO:0000305" key="9">
    <source>
    </source>
</evidence>
<evidence type="ECO:0000312" key="10">
    <source>
        <dbReference type="EMBL" id="AAL72348.1"/>
    </source>
</evidence>
<evidence type="ECO:0007829" key="11">
    <source>
        <dbReference type="PDB" id="7YA8"/>
    </source>
</evidence>
<accession>A0A0H2USC0</accession>
<organism>
    <name type="scientific">Shigella flexneri</name>
    <dbReference type="NCBI Taxonomy" id="623"/>
    <lineage>
        <taxon>Bacteria</taxon>
        <taxon>Pseudomonadati</taxon>
        <taxon>Pseudomonadota</taxon>
        <taxon>Gammaproteobacteria</taxon>
        <taxon>Enterobacterales</taxon>
        <taxon>Enterobacteriaceae</taxon>
        <taxon>Shigella</taxon>
    </lineage>
</organism>
<gene>
    <name evidence="7" type="primary">ipaH2.5</name>
    <name evidence="10" type="ordered locus">CP0054</name>
    <name evidence="10" type="ORF">SF_p0054</name>
</gene>
<dbReference type="EC" id="2.3.2.27" evidence="5"/>
<dbReference type="EMBL" id="AF386526">
    <property type="protein sequence ID" value="AAL72348.1"/>
    <property type="molecule type" value="Genomic_DNA"/>
</dbReference>
<dbReference type="RefSeq" id="NP_858187.1">
    <property type="nucleotide sequence ID" value="NC_004851.1"/>
</dbReference>
<dbReference type="PDB" id="7YA8">
    <property type="method" value="X-ray"/>
    <property type="resolution" value="3.40 A"/>
    <property type="chains" value="A/B=36-274"/>
</dbReference>
<dbReference type="PDBsum" id="7YA8"/>
<dbReference type="SMR" id="A0A0H2USC0"/>
<dbReference type="PaxDb" id="198214-CP0054"/>
<dbReference type="GeneID" id="1238051"/>
<dbReference type="KEGG" id="sfl:CP0054"/>
<dbReference type="PATRIC" id="fig|198214.7.peg.5294"/>
<dbReference type="HOGENOM" id="CLU_018533_2_0_6"/>
<dbReference type="UniPathway" id="UPA00143"/>
<dbReference type="Proteomes" id="UP000001006">
    <property type="component" value="Plasmid pCP301"/>
</dbReference>
<dbReference type="GO" id="GO:0005576">
    <property type="term" value="C:extracellular region"/>
    <property type="evidence" value="ECO:0007669"/>
    <property type="project" value="UniProtKB-SubCell"/>
</dbReference>
<dbReference type="GO" id="GO:0030430">
    <property type="term" value="C:host cell cytoplasm"/>
    <property type="evidence" value="ECO:0007669"/>
    <property type="project" value="UniProtKB-SubCell"/>
</dbReference>
<dbReference type="GO" id="GO:0090729">
    <property type="term" value="F:toxin activity"/>
    <property type="evidence" value="ECO:0000314"/>
    <property type="project" value="UniProtKB"/>
</dbReference>
<dbReference type="GO" id="GO:0061630">
    <property type="term" value="F:ubiquitin protein ligase activity"/>
    <property type="evidence" value="ECO:0000314"/>
    <property type="project" value="UniProtKB"/>
</dbReference>
<dbReference type="GO" id="GO:0016567">
    <property type="term" value="P:protein ubiquitination"/>
    <property type="evidence" value="ECO:0007669"/>
    <property type="project" value="UniProtKB-UniPathway"/>
</dbReference>
<dbReference type="FunFam" id="1.20.58.90:FF:000007">
    <property type="entry name" value="E3 ubiquitin-protein ligase ipaH9.8"/>
    <property type="match status" value="1"/>
</dbReference>
<dbReference type="FunFam" id="1.20.1270.130:FF:000001">
    <property type="entry name" value="Invasion plasmid antigen IpaH"/>
    <property type="match status" value="1"/>
</dbReference>
<dbReference type="FunFam" id="1.20.58.360:FF:000001">
    <property type="entry name" value="Probable E3 ubiquitin-protein ligase ipaH7.8"/>
    <property type="match status" value="1"/>
</dbReference>
<dbReference type="Gene3D" id="1.20.58.90">
    <property type="match status" value="1"/>
</dbReference>
<dbReference type="Gene3D" id="3.80.10.10">
    <property type="entry name" value="Ribonuclease Inhibitor"/>
    <property type="match status" value="1"/>
</dbReference>
<dbReference type="Gene3D" id="1.20.58.360">
    <property type="entry name" value="Shigella T3SS effector IpaH defines"/>
    <property type="match status" value="1"/>
</dbReference>
<dbReference type="Gene3D" id="1.20.1270.130">
    <property type="entry name" value="Shigella T3SS effector IpaH domain"/>
    <property type="match status" value="1"/>
</dbReference>
<dbReference type="InterPro" id="IPR001611">
    <property type="entry name" value="Leu-rich_rpt"/>
</dbReference>
<dbReference type="InterPro" id="IPR051071">
    <property type="entry name" value="LRR-bact_E3_ubiq_ligases"/>
</dbReference>
<dbReference type="InterPro" id="IPR032675">
    <property type="entry name" value="LRR_dom_sf"/>
</dbReference>
<dbReference type="InterPro" id="IPR032674">
    <property type="entry name" value="LRR_E3_ligase_N"/>
</dbReference>
<dbReference type="InterPro" id="IPR029487">
    <property type="entry name" value="NEL_dom"/>
</dbReference>
<dbReference type="NCBIfam" id="NF046045">
    <property type="entry name" value="IpaH_Shig"/>
    <property type="match status" value="1"/>
</dbReference>
<dbReference type="PANTHER" id="PTHR47114">
    <property type="match status" value="1"/>
</dbReference>
<dbReference type="PANTHER" id="PTHR47114:SF2">
    <property type="entry name" value="OLIGODENDROCYTE-MYELIN GLYCOPROTEIN"/>
    <property type="match status" value="1"/>
</dbReference>
<dbReference type="Pfam" id="PF12468">
    <property type="entry name" value="LRR_TTSS"/>
    <property type="match status" value="1"/>
</dbReference>
<dbReference type="Pfam" id="PF14496">
    <property type="entry name" value="NEL"/>
    <property type="match status" value="1"/>
</dbReference>
<dbReference type="SMART" id="SM00364">
    <property type="entry name" value="LRR_BAC"/>
    <property type="match status" value="8"/>
</dbReference>
<dbReference type="SUPFAM" id="SSF52058">
    <property type="entry name" value="L domain-like"/>
    <property type="match status" value="1"/>
</dbReference>
<dbReference type="PROSITE" id="PS51450">
    <property type="entry name" value="LRR"/>
    <property type="match status" value="4"/>
</dbReference>
<dbReference type="PROSITE" id="PS52053">
    <property type="entry name" value="NEL"/>
    <property type="match status" value="1"/>
</dbReference>